<keyword id="KW-0233">DNA recombination</keyword>
<keyword id="KW-0238">DNA-binding</keyword>
<keyword id="KW-0804">Transcription</keyword>
<keyword id="KW-0805">Transcription regulation</keyword>
<keyword id="KW-0810">Translation regulation</keyword>
<gene>
    <name evidence="1" type="primary">ihfA</name>
    <name evidence="1" type="synonym">himA</name>
    <name type="ordered locus">BB2042</name>
</gene>
<protein>
    <recommendedName>
        <fullName evidence="1">Integration host factor subunit alpha</fullName>
        <shortName evidence="1">IHF-alpha</shortName>
    </recommendedName>
</protein>
<accession>Q7WKR3</accession>
<comment type="function">
    <text evidence="1">This protein is one of the two subunits of integration host factor, a specific DNA-binding protein that functions in genetic recombination as well as in transcriptional and translational control.</text>
</comment>
<comment type="subunit">
    <text evidence="1">Heterodimer of an alpha and a beta chain.</text>
</comment>
<comment type="similarity">
    <text evidence="1">Belongs to the bacterial histone-like protein family.</text>
</comment>
<organism>
    <name type="scientific">Bordetella bronchiseptica (strain ATCC BAA-588 / NCTC 13252 / RB50)</name>
    <name type="common">Alcaligenes bronchisepticus</name>
    <dbReference type="NCBI Taxonomy" id="257310"/>
    <lineage>
        <taxon>Bacteria</taxon>
        <taxon>Pseudomonadati</taxon>
        <taxon>Pseudomonadota</taxon>
        <taxon>Betaproteobacteria</taxon>
        <taxon>Burkholderiales</taxon>
        <taxon>Alcaligenaceae</taxon>
        <taxon>Bordetella</taxon>
    </lineage>
</organism>
<reference key="1">
    <citation type="journal article" date="2003" name="Nat. Genet.">
        <title>Comparative analysis of the genome sequences of Bordetella pertussis, Bordetella parapertussis and Bordetella bronchiseptica.</title>
        <authorList>
            <person name="Parkhill J."/>
            <person name="Sebaihia M."/>
            <person name="Preston A."/>
            <person name="Murphy L.D."/>
            <person name="Thomson N.R."/>
            <person name="Harris D.E."/>
            <person name="Holden M.T.G."/>
            <person name="Churcher C.M."/>
            <person name="Bentley S.D."/>
            <person name="Mungall K.L."/>
            <person name="Cerdeno-Tarraga A.-M."/>
            <person name="Temple L."/>
            <person name="James K.D."/>
            <person name="Harris B."/>
            <person name="Quail M.A."/>
            <person name="Achtman M."/>
            <person name="Atkin R."/>
            <person name="Baker S."/>
            <person name="Basham D."/>
            <person name="Bason N."/>
            <person name="Cherevach I."/>
            <person name="Chillingworth T."/>
            <person name="Collins M."/>
            <person name="Cronin A."/>
            <person name="Davis P."/>
            <person name="Doggett J."/>
            <person name="Feltwell T."/>
            <person name="Goble A."/>
            <person name="Hamlin N."/>
            <person name="Hauser H."/>
            <person name="Holroyd S."/>
            <person name="Jagels K."/>
            <person name="Leather S."/>
            <person name="Moule S."/>
            <person name="Norberczak H."/>
            <person name="O'Neil S."/>
            <person name="Ormond D."/>
            <person name="Price C."/>
            <person name="Rabbinowitsch E."/>
            <person name="Rutter S."/>
            <person name="Sanders M."/>
            <person name="Saunders D."/>
            <person name="Seeger K."/>
            <person name="Sharp S."/>
            <person name="Simmonds M."/>
            <person name="Skelton J."/>
            <person name="Squares R."/>
            <person name="Squares S."/>
            <person name="Stevens K."/>
            <person name="Unwin L."/>
            <person name="Whitehead S."/>
            <person name="Barrell B.G."/>
            <person name="Maskell D.J."/>
        </authorList>
    </citation>
    <scope>NUCLEOTIDE SEQUENCE [LARGE SCALE GENOMIC DNA]</scope>
    <source>
        <strain>ATCC BAA-588 / NCTC 13252 / RB50</strain>
    </source>
</reference>
<evidence type="ECO:0000255" key="1">
    <source>
        <dbReference type="HAMAP-Rule" id="MF_00380"/>
    </source>
</evidence>
<evidence type="ECO:0000256" key="2">
    <source>
        <dbReference type="SAM" id="MobiDB-lite"/>
    </source>
</evidence>
<feature type="chain" id="PRO_0000277715" description="Integration host factor subunit alpha">
    <location>
        <begin position="1"/>
        <end position="113"/>
    </location>
</feature>
<feature type="region of interest" description="Disordered" evidence="2">
    <location>
        <begin position="59"/>
        <end position="80"/>
    </location>
</feature>
<sequence>MGTTMLAEPRTLTKAELAELLFERVGLNKREAKDIVDTFFEEIRDALARGDSVKLSGFGNFQVRDKPPRPGRNPKTGETIPIAARRVVTFHASQKLKSVVEQPSSPPDPASAE</sequence>
<dbReference type="EMBL" id="BX640443">
    <property type="protein sequence ID" value="CAE32538.1"/>
    <property type="molecule type" value="Genomic_DNA"/>
</dbReference>
<dbReference type="RefSeq" id="WP_003812826.1">
    <property type="nucleotide sequence ID" value="NC_002927.3"/>
</dbReference>
<dbReference type="SMR" id="Q7WKR3"/>
<dbReference type="KEGG" id="bbr:BB2042"/>
<dbReference type="eggNOG" id="COG0776">
    <property type="taxonomic scope" value="Bacteria"/>
</dbReference>
<dbReference type="HOGENOM" id="CLU_105066_1_0_4"/>
<dbReference type="Proteomes" id="UP000001027">
    <property type="component" value="Chromosome"/>
</dbReference>
<dbReference type="GO" id="GO:0005829">
    <property type="term" value="C:cytosol"/>
    <property type="evidence" value="ECO:0007669"/>
    <property type="project" value="TreeGrafter"/>
</dbReference>
<dbReference type="GO" id="GO:0003677">
    <property type="term" value="F:DNA binding"/>
    <property type="evidence" value="ECO:0007669"/>
    <property type="project" value="UniProtKB-UniRule"/>
</dbReference>
<dbReference type="GO" id="GO:0030527">
    <property type="term" value="F:structural constituent of chromatin"/>
    <property type="evidence" value="ECO:0007669"/>
    <property type="project" value="InterPro"/>
</dbReference>
<dbReference type="GO" id="GO:0006310">
    <property type="term" value="P:DNA recombination"/>
    <property type="evidence" value="ECO:0007669"/>
    <property type="project" value="UniProtKB-UniRule"/>
</dbReference>
<dbReference type="GO" id="GO:0009893">
    <property type="term" value="P:positive regulation of metabolic process"/>
    <property type="evidence" value="ECO:0007669"/>
    <property type="project" value="UniProtKB-ARBA"/>
</dbReference>
<dbReference type="GO" id="GO:0006355">
    <property type="term" value="P:regulation of DNA-templated transcription"/>
    <property type="evidence" value="ECO:0007669"/>
    <property type="project" value="UniProtKB-UniRule"/>
</dbReference>
<dbReference type="GO" id="GO:0006417">
    <property type="term" value="P:regulation of translation"/>
    <property type="evidence" value="ECO:0007669"/>
    <property type="project" value="UniProtKB-UniRule"/>
</dbReference>
<dbReference type="CDD" id="cd13835">
    <property type="entry name" value="IHF_A"/>
    <property type="match status" value="1"/>
</dbReference>
<dbReference type="FunFam" id="4.10.520.10:FF:000002">
    <property type="entry name" value="Integration host factor subunit alpha"/>
    <property type="match status" value="1"/>
</dbReference>
<dbReference type="Gene3D" id="4.10.520.10">
    <property type="entry name" value="IHF-like DNA-binding proteins"/>
    <property type="match status" value="1"/>
</dbReference>
<dbReference type="HAMAP" id="MF_00380">
    <property type="entry name" value="IHF_alpha"/>
    <property type="match status" value="1"/>
</dbReference>
<dbReference type="InterPro" id="IPR000119">
    <property type="entry name" value="Hist_DNA-bd"/>
</dbReference>
<dbReference type="InterPro" id="IPR020816">
    <property type="entry name" value="Histone-like_DNA-bd_CS"/>
</dbReference>
<dbReference type="InterPro" id="IPR010992">
    <property type="entry name" value="IHF-like_DNA-bd_dom_sf"/>
</dbReference>
<dbReference type="InterPro" id="IPR005684">
    <property type="entry name" value="IHF_alpha"/>
</dbReference>
<dbReference type="NCBIfam" id="TIGR00987">
    <property type="entry name" value="himA"/>
    <property type="match status" value="1"/>
</dbReference>
<dbReference type="NCBIfam" id="NF001401">
    <property type="entry name" value="PRK00285.1"/>
    <property type="match status" value="1"/>
</dbReference>
<dbReference type="PANTHER" id="PTHR33175">
    <property type="entry name" value="DNA-BINDING PROTEIN HU"/>
    <property type="match status" value="1"/>
</dbReference>
<dbReference type="PANTHER" id="PTHR33175:SF2">
    <property type="entry name" value="INTEGRATION HOST FACTOR SUBUNIT ALPHA"/>
    <property type="match status" value="1"/>
</dbReference>
<dbReference type="Pfam" id="PF00216">
    <property type="entry name" value="Bac_DNA_binding"/>
    <property type="match status" value="1"/>
</dbReference>
<dbReference type="PRINTS" id="PR01727">
    <property type="entry name" value="DNABINDINGHU"/>
</dbReference>
<dbReference type="SMART" id="SM00411">
    <property type="entry name" value="BHL"/>
    <property type="match status" value="1"/>
</dbReference>
<dbReference type="SUPFAM" id="SSF47729">
    <property type="entry name" value="IHF-like DNA-binding proteins"/>
    <property type="match status" value="1"/>
</dbReference>
<dbReference type="PROSITE" id="PS00045">
    <property type="entry name" value="HISTONE_LIKE"/>
    <property type="match status" value="1"/>
</dbReference>
<proteinExistence type="inferred from homology"/>
<name>IHFA_BORBR</name>